<accession>Q1GK06</accession>
<keyword id="KW-1185">Reference proteome</keyword>
<keyword id="KW-0687">Ribonucleoprotein</keyword>
<keyword id="KW-0689">Ribosomal protein</keyword>
<keyword id="KW-0694">RNA-binding</keyword>
<keyword id="KW-0699">rRNA-binding</keyword>
<keyword id="KW-0820">tRNA-binding</keyword>
<organism>
    <name type="scientific">Ruegeria sp. (strain TM1040)</name>
    <name type="common">Silicibacter sp.</name>
    <dbReference type="NCBI Taxonomy" id="292414"/>
    <lineage>
        <taxon>Bacteria</taxon>
        <taxon>Pseudomonadati</taxon>
        <taxon>Pseudomonadota</taxon>
        <taxon>Alphaproteobacteria</taxon>
        <taxon>Rhodobacterales</taxon>
        <taxon>Roseobacteraceae</taxon>
        <taxon>Ruegeria</taxon>
    </lineage>
</organism>
<name>RS13_RUEST</name>
<reference key="1">
    <citation type="submission" date="2006-05" db="EMBL/GenBank/DDBJ databases">
        <title>Complete sequence of chromosome of Silicibacter sp. TM1040.</title>
        <authorList>
            <consortium name="US DOE Joint Genome Institute"/>
            <person name="Copeland A."/>
            <person name="Lucas S."/>
            <person name="Lapidus A."/>
            <person name="Barry K."/>
            <person name="Detter J.C."/>
            <person name="Glavina del Rio T."/>
            <person name="Hammon N."/>
            <person name="Israni S."/>
            <person name="Dalin E."/>
            <person name="Tice H."/>
            <person name="Pitluck S."/>
            <person name="Brettin T."/>
            <person name="Bruce D."/>
            <person name="Han C."/>
            <person name="Tapia R."/>
            <person name="Goodwin L."/>
            <person name="Thompson L.S."/>
            <person name="Gilna P."/>
            <person name="Schmutz J."/>
            <person name="Larimer F."/>
            <person name="Land M."/>
            <person name="Hauser L."/>
            <person name="Kyrpides N."/>
            <person name="Kim E."/>
            <person name="Belas R."/>
            <person name="Moran M.A."/>
            <person name="Buchan A."/>
            <person name="Gonzalez J.M."/>
            <person name="Schell M.A."/>
            <person name="Sun F."/>
            <person name="Richardson P."/>
        </authorList>
    </citation>
    <scope>NUCLEOTIDE SEQUENCE [LARGE SCALE GENOMIC DNA]</scope>
    <source>
        <strain>TM1040</strain>
    </source>
</reference>
<gene>
    <name evidence="1" type="primary">rpsM</name>
    <name type="ordered locus">TM1040_0277</name>
</gene>
<proteinExistence type="inferred from homology"/>
<protein>
    <recommendedName>
        <fullName evidence="1">Small ribosomal subunit protein uS13</fullName>
    </recommendedName>
    <alternativeName>
        <fullName evidence="3">30S ribosomal protein S13</fullName>
    </alternativeName>
</protein>
<dbReference type="EMBL" id="CP000377">
    <property type="protein sequence ID" value="ABF63010.1"/>
    <property type="molecule type" value="Genomic_DNA"/>
</dbReference>
<dbReference type="RefSeq" id="WP_011537626.1">
    <property type="nucleotide sequence ID" value="NC_008044.1"/>
</dbReference>
<dbReference type="SMR" id="Q1GK06"/>
<dbReference type="STRING" id="292414.TM1040_0277"/>
<dbReference type="KEGG" id="sit:TM1040_0277"/>
<dbReference type="eggNOG" id="COG0099">
    <property type="taxonomic scope" value="Bacteria"/>
</dbReference>
<dbReference type="HOGENOM" id="CLU_103849_1_2_5"/>
<dbReference type="OrthoDB" id="9803610at2"/>
<dbReference type="Proteomes" id="UP000000636">
    <property type="component" value="Chromosome"/>
</dbReference>
<dbReference type="GO" id="GO:0005829">
    <property type="term" value="C:cytosol"/>
    <property type="evidence" value="ECO:0007669"/>
    <property type="project" value="TreeGrafter"/>
</dbReference>
<dbReference type="GO" id="GO:0015935">
    <property type="term" value="C:small ribosomal subunit"/>
    <property type="evidence" value="ECO:0007669"/>
    <property type="project" value="TreeGrafter"/>
</dbReference>
<dbReference type="GO" id="GO:0019843">
    <property type="term" value="F:rRNA binding"/>
    <property type="evidence" value="ECO:0007669"/>
    <property type="project" value="UniProtKB-UniRule"/>
</dbReference>
<dbReference type="GO" id="GO:0003735">
    <property type="term" value="F:structural constituent of ribosome"/>
    <property type="evidence" value="ECO:0007669"/>
    <property type="project" value="InterPro"/>
</dbReference>
<dbReference type="GO" id="GO:0000049">
    <property type="term" value="F:tRNA binding"/>
    <property type="evidence" value="ECO:0007669"/>
    <property type="project" value="UniProtKB-UniRule"/>
</dbReference>
<dbReference type="GO" id="GO:0006412">
    <property type="term" value="P:translation"/>
    <property type="evidence" value="ECO:0007669"/>
    <property type="project" value="UniProtKB-UniRule"/>
</dbReference>
<dbReference type="FunFam" id="1.10.8.50:FF:000001">
    <property type="entry name" value="30S ribosomal protein S13"/>
    <property type="match status" value="1"/>
</dbReference>
<dbReference type="FunFam" id="4.10.910.10:FF:000001">
    <property type="entry name" value="30S ribosomal protein S13"/>
    <property type="match status" value="1"/>
</dbReference>
<dbReference type="Gene3D" id="1.10.8.50">
    <property type="match status" value="1"/>
</dbReference>
<dbReference type="Gene3D" id="4.10.910.10">
    <property type="entry name" value="30s ribosomal protein s13, domain 2"/>
    <property type="match status" value="1"/>
</dbReference>
<dbReference type="HAMAP" id="MF_01315">
    <property type="entry name" value="Ribosomal_uS13"/>
    <property type="match status" value="1"/>
</dbReference>
<dbReference type="InterPro" id="IPR027437">
    <property type="entry name" value="Rbsml_uS13_C"/>
</dbReference>
<dbReference type="InterPro" id="IPR001892">
    <property type="entry name" value="Ribosomal_uS13"/>
</dbReference>
<dbReference type="InterPro" id="IPR010979">
    <property type="entry name" value="Ribosomal_uS13-like_H2TH"/>
</dbReference>
<dbReference type="InterPro" id="IPR019980">
    <property type="entry name" value="Ribosomal_uS13_bac-type"/>
</dbReference>
<dbReference type="InterPro" id="IPR018269">
    <property type="entry name" value="Ribosomal_uS13_CS"/>
</dbReference>
<dbReference type="NCBIfam" id="TIGR03631">
    <property type="entry name" value="uS13_bact"/>
    <property type="match status" value="1"/>
</dbReference>
<dbReference type="PANTHER" id="PTHR10871">
    <property type="entry name" value="30S RIBOSOMAL PROTEIN S13/40S RIBOSOMAL PROTEIN S18"/>
    <property type="match status" value="1"/>
</dbReference>
<dbReference type="PANTHER" id="PTHR10871:SF1">
    <property type="entry name" value="SMALL RIBOSOMAL SUBUNIT PROTEIN US13M"/>
    <property type="match status" value="1"/>
</dbReference>
<dbReference type="Pfam" id="PF00416">
    <property type="entry name" value="Ribosomal_S13"/>
    <property type="match status" value="1"/>
</dbReference>
<dbReference type="PIRSF" id="PIRSF002134">
    <property type="entry name" value="Ribosomal_S13"/>
    <property type="match status" value="1"/>
</dbReference>
<dbReference type="SUPFAM" id="SSF46946">
    <property type="entry name" value="S13-like H2TH domain"/>
    <property type="match status" value="1"/>
</dbReference>
<dbReference type="PROSITE" id="PS00646">
    <property type="entry name" value="RIBOSOMAL_S13_1"/>
    <property type="match status" value="1"/>
</dbReference>
<dbReference type="PROSITE" id="PS50159">
    <property type="entry name" value="RIBOSOMAL_S13_2"/>
    <property type="match status" value="1"/>
</dbReference>
<feature type="chain" id="PRO_0000306711" description="Small ribosomal subunit protein uS13">
    <location>
        <begin position="1"/>
        <end position="122"/>
    </location>
</feature>
<feature type="region of interest" description="Disordered" evidence="2">
    <location>
        <begin position="98"/>
        <end position="122"/>
    </location>
</feature>
<comment type="function">
    <text evidence="1">Located at the top of the head of the 30S subunit, it contacts several helices of the 16S rRNA. In the 70S ribosome it contacts the 23S rRNA (bridge B1a) and protein L5 of the 50S subunit (bridge B1b), connecting the 2 subunits; these bridges are implicated in subunit movement. Contacts the tRNAs in the A and P-sites.</text>
</comment>
<comment type="subunit">
    <text evidence="1">Part of the 30S ribosomal subunit. Forms a loose heterodimer with protein S19. Forms two bridges to the 50S subunit in the 70S ribosome.</text>
</comment>
<comment type="similarity">
    <text evidence="1">Belongs to the universal ribosomal protein uS13 family.</text>
</comment>
<evidence type="ECO:0000255" key="1">
    <source>
        <dbReference type="HAMAP-Rule" id="MF_01315"/>
    </source>
</evidence>
<evidence type="ECO:0000256" key="2">
    <source>
        <dbReference type="SAM" id="MobiDB-lite"/>
    </source>
</evidence>
<evidence type="ECO:0000305" key="3"/>
<sequence length="122" mass="13498">MARIAGVNIPTAKRVPIALTYITGIGPASAKAICEAVNIDATRRVNELSDAEVLAIREHIDATYTVEGDLRREVQMNIKRLMDLGCYRGLRHRRNLPVRGQRTHTNARTRKGPAKAIAGKKK</sequence>